<dbReference type="EC" id="5.2.1.8" evidence="1"/>
<dbReference type="EMBL" id="AE013598">
    <property type="protein sequence ID" value="AAW77000.1"/>
    <property type="molecule type" value="Genomic_DNA"/>
</dbReference>
<dbReference type="SMR" id="Q5GWC1"/>
<dbReference type="STRING" id="291331.XOO3746"/>
<dbReference type="KEGG" id="xoo:XOO3746"/>
<dbReference type="HOGENOM" id="CLU_034646_11_0_6"/>
<dbReference type="Proteomes" id="UP000006735">
    <property type="component" value="Chromosome"/>
</dbReference>
<dbReference type="GO" id="GO:0030288">
    <property type="term" value="C:outer membrane-bounded periplasmic space"/>
    <property type="evidence" value="ECO:0007669"/>
    <property type="project" value="InterPro"/>
</dbReference>
<dbReference type="GO" id="GO:0042277">
    <property type="term" value="F:peptide binding"/>
    <property type="evidence" value="ECO:0007669"/>
    <property type="project" value="InterPro"/>
</dbReference>
<dbReference type="GO" id="GO:0003755">
    <property type="term" value="F:peptidyl-prolyl cis-trans isomerase activity"/>
    <property type="evidence" value="ECO:0007669"/>
    <property type="project" value="UniProtKB-UniRule"/>
</dbReference>
<dbReference type="GO" id="GO:0051082">
    <property type="term" value="F:unfolded protein binding"/>
    <property type="evidence" value="ECO:0007669"/>
    <property type="project" value="UniProtKB-UniRule"/>
</dbReference>
<dbReference type="GO" id="GO:0043165">
    <property type="term" value="P:Gram-negative-bacterium-type cell outer membrane assembly"/>
    <property type="evidence" value="ECO:0007669"/>
    <property type="project" value="InterPro"/>
</dbReference>
<dbReference type="GO" id="GO:0006457">
    <property type="term" value="P:protein folding"/>
    <property type="evidence" value="ECO:0007669"/>
    <property type="project" value="UniProtKB-UniRule"/>
</dbReference>
<dbReference type="GO" id="GO:0050821">
    <property type="term" value="P:protein stabilization"/>
    <property type="evidence" value="ECO:0007669"/>
    <property type="project" value="InterPro"/>
</dbReference>
<dbReference type="Gene3D" id="3.10.50.40">
    <property type="match status" value="2"/>
</dbReference>
<dbReference type="Gene3D" id="1.10.4030.10">
    <property type="entry name" value="Porin chaperone SurA, peptide-binding domain"/>
    <property type="match status" value="1"/>
</dbReference>
<dbReference type="HAMAP" id="MF_01183">
    <property type="entry name" value="Chaperone_SurA"/>
    <property type="match status" value="1"/>
</dbReference>
<dbReference type="InterPro" id="IPR050280">
    <property type="entry name" value="OMP_Chaperone_SurA"/>
</dbReference>
<dbReference type="InterPro" id="IPR046357">
    <property type="entry name" value="PPIase_dom_sf"/>
</dbReference>
<dbReference type="InterPro" id="IPR000297">
    <property type="entry name" value="PPIase_PpiC"/>
</dbReference>
<dbReference type="InterPro" id="IPR023034">
    <property type="entry name" value="PPIase_SurA"/>
</dbReference>
<dbReference type="InterPro" id="IPR015391">
    <property type="entry name" value="SurA_N"/>
</dbReference>
<dbReference type="InterPro" id="IPR027304">
    <property type="entry name" value="Trigger_fact/SurA_dom_sf"/>
</dbReference>
<dbReference type="PANTHER" id="PTHR47637">
    <property type="entry name" value="CHAPERONE SURA"/>
    <property type="match status" value="1"/>
</dbReference>
<dbReference type="PANTHER" id="PTHR47637:SF1">
    <property type="entry name" value="CHAPERONE SURA"/>
    <property type="match status" value="1"/>
</dbReference>
<dbReference type="Pfam" id="PF00639">
    <property type="entry name" value="Rotamase"/>
    <property type="match status" value="1"/>
</dbReference>
<dbReference type="Pfam" id="PF13616">
    <property type="entry name" value="Rotamase_3"/>
    <property type="match status" value="1"/>
</dbReference>
<dbReference type="Pfam" id="PF09312">
    <property type="entry name" value="SurA_N"/>
    <property type="match status" value="1"/>
</dbReference>
<dbReference type="SUPFAM" id="SSF54534">
    <property type="entry name" value="FKBP-like"/>
    <property type="match status" value="2"/>
</dbReference>
<dbReference type="SUPFAM" id="SSF109998">
    <property type="entry name" value="Triger factor/SurA peptide-binding domain-like"/>
    <property type="match status" value="1"/>
</dbReference>
<dbReference type="PROSITE" id="PS50198">
    <property type="entry name" value="PPIC_PPIASE_2"/>
    <property type="match status" value="2"/>
</dbReference>
<comment type="function">
    <text evidence="1">Chaperone involved in the correct folding and assembly of outer membrane proteins. Recognizes specific patterns of aromatic residues and the orientation of their side chains, which are found more frequently in integral outer membrane proteins. May act in both early periplasmic and late outer membrane-associated steps of protein maturation.</text>
</comment>
<comment type="catalytic activity">
    <reaction evidence="1">
        <text>[protein]-peptidylproline (omega=180) = [protein]-peptidylproline (omega=0)</text>
        <dbReference type="Rhea" id="RHEA:16237"/>
        <dbReference type="Rhea" id="RHEA-COMP:10747"/>
        <dbReference type="Rhea" id="RHEA-COMP:10748"/>
        <dbReference type="ChEBI" id="CHEBI:83833"/>
        <dbReference type="ChEBI" id="CHEBI:83834"/>
        <dbReference type="EC" id="5.2.1.8"/>
    </reaction>
</comment>
<comment type="subcellular location">
    <subcellularLocation>
        <location evidence="1">Periplasm</location>
    </subcellularLocation>
    <text evidence="1">Is capable of associating with the outer membrane.</text>
</comment>
<comment type="domain">
    <text evidence="1">The PPIase activity resides only in the second parvulin domain. The N-terminal region and the C-terminal tail are necessary and sufficient for the chaperone activity of SurA. The PPIase activity is dispensable for SurA to function as a chaperone. The N-terminal region and the C-terminal tail are also required for porin recognition.</text>
</comment>
<evidence type="ECO:0000255" key="1">
    <source>
        <dbReference type="HAMAP-Rule" id="MF_01183"/>
    </source>
</evidence>
<evidence type="ECO:0000256" key="2">
    <source>
        <dbReference type="SAM" id="MobiDB-lite"/>
    </source>
</evidence>
<proteinExistence type="inferred from homology"/>
<gene>
    <name evidence="1" type="primary">surA</name>
    <name type="ordered locus">XOO3746</name>
</gene>
<protein>
    <recommendedName>
        <fullName evidence="1">Chaperone SurA</fullName>
    </recommendedName>
    <alternativeName>
        <fullName evidence="1">Peptidyl-prolyl cis-trans isomerase SurA</fullName>
        <shortName evidence="1">PPIase SurA</shortName>
        <ecNumber evidence="1">5.2.1.8</ecNumber>
    </alternativeName>
    <alternativeName>
        <fullName evidence="1">Rotamase SurA</fullName>
    </alternativeName>
</protein>
<sequence length="463" mass="50046">MTKPFSVVLASLLAITSTISPLASAQQSQPLDRIAAIVDEDVVLQSELDRAVRNVKSQYAGRENQLPPDDVLQRQVLERLILVKLQVGRADGSGIRVSDEELNRAIASIAQQNGTTVDGLRQKLAADGMGYADFRASVRDEIIVQRLRQSFAQSRISVSEGEVDTALTQQAATGSKYHLAHILIGLPEGATAEQIATGQKKVDGVKALIDKGELDFPAAAVRYSDSPNALEGGDLGWRSLDEIPNAFAQLIRDMKPGQVAGPLRGPSGFQLLKLMEMRDANAGGEKKMVTEYNARHILVRVGDNQTEAQAKAKIDTIRARIVGGADFQATAKESSEDTNSRGQGGDLGWFPADAFGPDFGKQVEGLADGAVSEPFRTQAGWHIVQRVGSRQTDVSAENQRAQVRETIGRRKLEEEYNRYLQELRGEAYVSYRTGDRADNNATAAPAKSADPALPAPPPAKPTR</sequence>
<reference key="1">
    <citation type="journal article" date="2005" name="Nucleic Acids Res.">
        <title>The genome sequence of Xanthomonas oryzae pathovar oryzae KACC10331, the bacterial blight pathogen of rice.</title>
        <authorList>
            <person name="Lee B.-M."/>
            <person name="Park Y.-J."/>
            <person name="Park D.-S."/>
            <person name="Kang H.-W."/>
            <person name="Kim J.-G."/>
            <person name="Song E.-S."/>
            <person name="Park I.-C."/>
            <person name="Yoon U.-H."/>
            <person name="Hahn J.-H."/>
            <person name="Koo B.-S."/>
            <person name="Lee G.-B."/>
            <person name="Kim H."/>
            <person name="Park H.-S."/>
            <person name="Yoon K.-O."/>
            <person name="Kim J.-H."/>
            <person name="Jung C.-H."/>
            <person name="Koh N.-H."/>
            <person name="Seo J.-S."/>
            <person name="Go S.-J."/>
        </authorList>
    </citation>
    <scope>NUCLEOTIDE SEQUENCE [LARGE SCALE GENOMIC DNA]</scope>
    <source>
        <strain>KACC10331 / KXO85</strain>
    </source>
</reference>
<keyword id="KW-0143">Chaperone</keyword>
<keyword id="KW-0413">Isomerase</keyword>
<keyword id="KW-0574">Periplasm</keyword>
<keyword id="KW-1185">Reference proteome</keyword>
<keyword id="KW-0677">Repeat</keyword>
<keyword id="KW-0697">Rotamase</keyword>
<keyword id="KW-0732">Signal</keyword>
<accession>Q5GWC1</accession>
<organism>
    <name type="scientific">Xanthomonas oryzae pv. oryzae (strain KACC10331 / KXO85)</name>
    <dbReference type="NCBI Taxonomy" id="291331"/>
    <lineage>
        <taxon>Bacteria</taxon>
        <taxon>Pseudomonadati</taxon>
        <taxon>Pseudomonadota</taxon>
        <taxon>Gammaproteobacteria</taxon>
        <taxon>Lysobacterales</taxon>
        <taxon>Lysobacteraceae</taxon>
        <taxon>Xanthomonas</taxon>
    </lineage>
</organism>
<name>SURA_XANOR</name>
<feature type="signal peptide" evidence="1">
    <location>
        <begin position="1"/>
        <end position="25"/>
    </location>
</feature>
<feature type="chain" id="PRO_0000270051" description="Chaperone SurA">
    <location>
        <begin position="26"/>
        <end position="463"/>
    </location>
</feature>
<feature type="domain" description="PpiC 1" evidence="1">
    <location>
        <begin position="174"/>
        <end position="276"/>
    </location>
</feature>
<feature type="domain" description="PpiC 2" evidence="1">
    <location>
        <begin position="289"/>
        <end position="388"/>
    </location>
</feature>
<feature type="region of interest" description="Disordered" evidence="2">
    <location>
        <begin position="329"/>
        <end position="348"/>
    </location>
</feature>
<feature type="region of interest" description="Disordered" evidence="2">
    <location>
        <begin position="434"/>
        <end position="463"/>
    </location>
</feature>
<feature type="compositionally biased region" description="Low complexity" evidence="2">
    <location>
        <begin position="439"/>
        <end position="452"/>
    </location>
</feature>
<feature type="compositionally biased region" description="Pro residues" evidence="2">
    <location>
        <begin position="453"/>
        <end position="463"/>
    </location>
</feature>